<sequence length="2116" mass="230398">MEKLLDEVLAPGGPYNLTVGSWVRDHVRSIVEGAWEVRDVVTAAQKRAIVAVIPRPVFTQMQVSDHPALHAISRYTRRHWIEWGPKEALHVLIDPSPGLLREVARVERRWVALCLHRTARKLATALAETAGEAWHADYVCALRGAPSGPFYVHPEDVPRGGRAVADRCLLYYTPMQMCELMRTIDATLLVAVDLWPVALAAHVGDDWDDLGIAWHLDHDGGCPADCRGAGAGPMPGYTRPCTTRIYQVLPDTAHPGRLYRCGPRLWTRDCAVAELSWEVAQHCGHQARVRAVRCTLPIRHVRSLQPSARVRLPDLVHLAEVGRWRWFSLPRPVFQRMLSYCKTLSPDAYYSERVFKFKNALSHSITLAGNVLQEGWKGTCAEEDALCAYVAFRAWQSNARLAGVMKGAKRCAADSLSVAGWLGTVWDAIKRFFGSVPLAERMEEWEQDAAVAAFDRGPLEDGGHHLDTVQPPKPLPRPEIAATWIVHAASADRHCACAPRCDVPRERPSAPAGPPDDEAIIPPWLFAECRTLRCREWDFEALRARADTAATPAPLAPRPARHPTVLYRHPAHHGPWLTLDEPGEADAALVLCDPLGQPLRGPERHFAVGAHMCAQARGLQAFVRVVPPPERPWADGGARTWAKFFRGCAWAQRLLGEPAVMHLPYTDGDVPQLIALALRTLAQQGAALALSVRDLPGGAAFDANAVTAAVRADPGQLALTSPPPDNPPPPRRARRSQRHADARGPPPPAPARDPPPPAPSPPAPPRAGDPASPISAEPADRARDAEPEVACEPGGPATPARADPDSDIVESYARAAGPVHLRVRNIMDPPPGCKVVVNAANEGLLAGSGVCGAIFASAAASLAEDCRRLAPCPTGEAVATPGHGCGYAHIIHAVAPRRPQDPAALEQSEALLERAYRSIVALAAARRWTCVACPLLGAGIYGWSAAESLRAALAAARTEPAERVSLHICHPDRATLMHASVLVGAGLAARRVSPPPTEPPASRPADDPGRSAQRTAPPPAAPPGDAAAPELRGCQGCELCRYTRVTNDRAYVNLWLERDRGATGWAMRIPEVVVYGPEHLAAHFPLNHYSVLKPAEVRPPRGMCGSDMWRCRGWQGMPQVRCTPSNAHAALCRIGIPPRVSTRGDERDPNTCWLRAAANVAQAARACGAYTSAGCPKCAYGRALSEARTHEDFAALSQRWIASHADASLDGTGDPLDPLMATVGCACSRVWVGSEHEAPPDHLLVSLHRAPNGPWGVVLEVRARPEGGNPTGHFVCAVGGGPRRVSDRPHLWLAVPLSRGGGTCAATDEGLAQAYYDDLEVRRLGDDAMARAALASVQRPRKGPYNIKVWNMAAGAGKTTRILAAFTREDLYVCPTNALLHEIQAKLRARDIDIKNAATYERALTKPLAAYRRIYIDEAFTLGGEYCAFVASQTTAEVICVGDRDQCGPHYANNCRTPVPDRWPTERSRHTWRFPDCWAARLRAGLDYDVEGEHAGTFACNLWDGRQVDLHLAFSRETVRRLHEAGIRAYTVREAQGMSVGTACIHVGRDGTDVALALTRDLAIVSLTRASDALYLHELEDGSLRAAGLSAFLDAGALAELKEVPAGIDRVVAVEQAPPPLPPADGIPEAQDVPPFCPRTLEELVFGRAGHPHYADLNRVTEGEREVRYMRISRHLLNKNHTEMPGTERVLSAVCAVRRYRAGEDGSTLRTAVARQHPRPFRQIPPPRVTAGVAQEWRMTYLRERIDLTDVYTQMGVAARELTDRYARRYPEIFAGMCTAQSLSVPAFLKATLKCVDAALGPRDTEDCHAAQGKAGLEIRAWAKEWVQVMSPHFRAIQKIIMRALRPQFLVAAGHTEPEVDAWWQAHYTTNAIEVDFTEFDMNQTLATRDVELEISAALLGLPCAEDYRALRAGSYCTLRELGSTETGCERTSGEPATLLHNTTVAMCMAMRMVPKGVRWAGIFQGDDMVIFLPEGARSAALKWTPSEVGLFGSHIPVKHVSTPTPSFCGHVGTAAGLFHDVMHQAIKVLCRRFDPDVLEEQQVALLDRLRGVYAALPDTVAANAAYYDYSAERVLAIVRELTAYARGRGLDHPATIGALEEIQTPYARANLHDAD</sequence>
<accession>Q6X2U2</accession>
<dbReference type="EC" id="3.4.22.-"/>
<dbReference type="EC" id="2.7.7.48" evidence="4"/>
<dbReference type="EC" id="3.6.1.15"/>
<dbReference type="EC" id="3.6.4.13"/>
<dbReference type="EMBL" id="AY258323">
    <property type="protein sequence ID" value="AAP82234.1"/>
    <property type="molecule type" value="Genomic_RNA"/>
</dbReference>
<dbReference type="SMR" id="Q6X2U2"/>
<dbReference type="MEROPS" id="C27.001"/>
<dbReference type="Proteomes" id="UP000007145">
    <property type="component" value="Genome"/>
</dbReference>
<dbReference type="GO" id="GO:0033644">
    <property type="term" value="C:host cell membrane"/>
    <property type="evidence" value="ECO:0007669"/>
    <property type="project" value="UniProtKB-SubCell"/>
</dbReference>
<dbReference type="GO" id="GO:0044220">
    <property type="term" value="C:host cell perinuclear region of cytoplasm"/>
    <property type="evidence" value="ECO:0007669"/>
    <property type="project" value="UniProtKB-SubCell"/>
</dbReference>
<dbReference type="GO" id="GO:0016020">
    <property type="term" value="C:membrane"/>
    <property type="evidence" value="ECO:0007669"/>
    <property type="project" value="UniProtKB-KW"/>
</dbReference>
<dbReference type="GO" id="GO:0005524">
    <property type="term" value="F:ATP binding"/>
    <property type="evidence" value="ECO:0007669"/>
    <property type="project" value="UniProtKB-KW"/>
</dbReference>
<dbReference type="GO" id="GO:0016887">
    <property type="term" value="F:ATP hydrolysis activity"/>
    <property type="evidence" value="ECO:0007669"/>
    <property type="project" value="RHEA"/>
</dbReference>
<dbReference type="GO" id="GO:0004197">
    <property type="term" value="F:cysteine-type endopeptidase activity"/>
    <property type="evidence" value="ECO:0007669"/>
    <property type="project" value="InterPro"/>
</dbReference>
<dbReference type="GO" id="GO:0046872">
    <property type="term" value="F:metal ion binding"/>
    <property type="evidence" value="ECO:0007669"/>
    <property type="project" value="UniProtKB-KW"/>
</dbReference>
<dbReference type="GO" id="GO:0008174">
    <property type="term" value="F:mRNA methyltransferase activity"/>
    <property type="evidence" value="ECO:0007669"/>
    <property type="project" value="InterPro"/>
</dbReference>
<dbReference type="GO" id="GO:0003723">
    <property type="term" value="F:RNA binding"/>
    <property type="evidence" value="ECO:0007669"/>
    <property type="project" value="InterPro"/>
</dbReference>
<dbReference type="GO" id="GO:0003724">
    <property type="term" value="F:RNA helicase activity"/>
    <property type="evidence" value="ECO:0007669"/>
    <property type="project" value="UniProtKB-EC"/>
</dbReference>
<dbReference type="GO" id="GO:0003968">
    <property type="term" value="F:RNA-directed RNA polymerase activity"/>
    <property type="evidence" value="ECO:0007669"/>
    <property type="project" value="UniProtKB-KW"/>
</dbReference>
<dbReference type="GO" id="GO:0006351">
    <property type="term" value="P:DNA-templated transcription"/>
    <property type="evidence" value="ECO:0007669"/>
    <property type="project" value="InterPro"/>
</dbReference>
<dbReference type="GO" id="GO:0016556">
    <property type="term" value="P:mRNA modification"/>
    <property type="evidence" value="ECO:0007669"/>
    <property type="project" value="InterPro"/>
</dbReference>
<dbReference type="GO" id="GO:0006508">
    <property type="term" value="P:proteolysis"/>
    <property type="evidence" value="ECO:0007669"/>
    <property type="project" value="UniProtKB-KW"/>
</dbReference>
<dbReference type="GO" id="GO:0006396">
    <property type="term" value="P:RNA processing"/>
    <property type="evidence" value="ECO:0007669"/>
    <property type="project" value="InterPro"/>
</dbReference>
<dbReference type="GO" id="GO:0039694">
    <property type="term" value="P:viral RNA genome replication"/>
    <property type="evidence" value="ECO:0007669"/>
    <property type="project" value="InterPro"/>
</dbReference>
<dbReference type="CDD" id="cd21557">
    <property type="entry name" value="Macro_X_Nsp3-like"/>
    <property type="match status" value="1"/>
</dbReference>
<dbReference type="CDD" id="cd23260">
    <property type="entry name" value="Matonaviridae_RdRp"/>
    <property type="match status" value="1"/>
</dbReference>
<dbReference type="Gene3D" id="3.40.220.10">
    <property type="entry name" value="Leucine Aminopeptidase, subunit E, domain 1"/>
    <property type="match status" value="1"/>
</dbReference>
<dbReference type="Gene3D" id="3.40.50.300">
    <property type="entry name" value="P-loop containing nucleotide triphosphate hydrolases"/>
    <property type="match status" value="1"/>
</dbReference>
<dbReference type="InterPro" id="IPR027351">
    <property type="entry name" value="(+)RNA_virus_helicase_core_dom"/>
</dbReference>
<dbReference type="InterPro" id="IPR002588">
    <property type="entry name" value="Alphavirus-like_MT_dom"/>
</dbReference>
<dbReference type="InterPro" id="IPR043502">
    <property type="entry name" value="DNA/RNA_pol_sf"/>
</dbReference>
<dbReference type="InterPro" id="IPR002589">
    <property type="entry name" value="Macro_dom"/>
</dbReference>
<dbReference type="InterPro" id="IPR043472">
    <property type="entry name" value="Macro_dom-like"/>
</dbReference>
<dbReference type="InterPro" id="IPR044371">
    <property type="entry name" value="Macro_X_NSP3-like"/>
</dbReference>
<dbReference type="InterPro" id="IPR047306">
    <property type="entry name" value="Matonaviridae_RdRp"/>
</dbReference>
<dbReference type="InterPro" id="IPR027417">
    <property type="entry name" value="P-loop_NTPase"/>
</dbReference>
<dbReference type="InterPro" id="IPR008738">
    <property type="entry name" value="Peptidase_C27"/>
</dbReference>
<dbReference type="InterPro" id="IPR001788">
    <property type="entry name" value="RNA-dep_RNA_pol_alsuvir"/>
</dbReference>
<dbReference type="InterPro" id="IPR007094">
    <property type="entry name" value="RNA-dir_pol_PSvirus"/>
</dbReference>
<dbReference type="InterPro" id="IPR022245">
    <property type="entry name" value="Rubi_NSP_C"/>
</dbReference>
<dbReference type="InterPro" id="IPR044070">
    <property type="entry name" value="RUBV_NS_PRO"/>
</dbReference>
<dbReference type="PANTHER" id="PTHR11106">
    <property type="entry name" value="GANGLIOSIDE INDUCED DIFFERENTIATION ASSOCIATED PROTEIN 2-RELATED"/>
    <property type="match status" value="1"/>
</dbReference>
<dbReference type="PANTHER" id="PTHR11106:SF27">
    <property type="entry name" value="MACRO DOMAIN-CONTAINING PROTEIN"/>
    <property type="match status" value="1"/>
</dbReference>
<dbReference type="Pfam" id="PF01661">
    <property type="entry name" value="Macro"/>
    <property type="match status" value="1"/>
</dbReference>
<dbReference type="Pfam" id="PF05407">
    <property type="entry name" value="Peptidase_C27"/>
    <property type="match status" value="1"/>
</dbReference>
<dbReference type="Pfam" id="PF00978">
    <property type="entry name" value="RdRP_2"/>
    <property type="match status" value="1"/>
</dbReference>
<dbReference type="Pfam" id="PF12601">
    <property type="entry name" value="Rubi_NSP_C"/>
    <property type="match status" value="1"/>
</dbReference>
<dbReference type="Pfam" id="PF01443">
    <property type="entry name" value="Viral_helicase1"/>
    <property type="match status" value="1"/>
</dbReference>
<dbReference type="SMART" id="SM00506">
    <property type="entry name" value="A1pp"/>
    <property type="match status" value="1"/>
</dbReference>
<dbReference type="SUPFAM" id="SSF56672">
    <property type="entry name" value="DNA/RNA polymerases"/>
    <property type="match status" value="1"/>
</dbReference>
<dbReference type="SUPFAM" id="SSF52949">
    <property type="entry name" value="Macro domain-like"/>
    <property type="match status" value="1"/>
</dbReference>
<dbReference type="SUPFAM" id="SSF52540">
    <property type="entry name" value="P-loop containing nucleoside triphosphate hydrolases"/>
    <property type="match status" value="1"/>
</dbReference>
<dbReference type="PROSITE" id="PS51743">
    <property type="entry name" value="ALPHAVIRUS_MT"/>
    <property type="match status" value="1"/>
</dbReference>
<dbReference type="PROSITE" id="PS51154">
    <property type="entry name" value="MACRO"/>
    <property type="match status" value="1"/>
</dbReference>
<dbReference type="PROSITE" id="PS51657">
    <property type="entry name" value="PSRV_HELICASE"/>
    <property type="match status" value="1"/>
</dbReference>
<dbReference type="PROSITE" id="PS50507">
    <property type="entry name" value="RDRP_SSRNA_POS"/>
    <property type="match status" value="1"/>
</dbReference>
<dbReference type="PROSITE" id="PS51889">
    <property type="entry name" value="RUBV_NS_PRO"/>
    <property type="match status" value="1"/>
</dbReference>
<feature type="chain" id="PRO_0000240164" description="Non-structural polyprotein p200">
    <location>
        <begin position="1"/>
        <end position="2116"/>
    </location>
</feature>
<feature type="chain" id="PRO_0000240165" description="Protease/methyltransferase p150">
    <location>
        <begin position="1"/>
        <end position="1301"/>
    </location>
</feature>
<feature type="chain" id="PRO_0000240166" description="RNA-directed RNA polymerase p90">
    <location>
        <begin position="1302"/>
        <end position="2116"/>
    </location>
</feature>
<feature type="domain" description="Alphavirus-like MT" evidence="6">
    <location>
        <begin position="57"/>
        <end position="247"/>
    </location>
</feature>
<feature type="domain" description="Macro" evidence="3">
    <location>
        <begin position="806"/>
        <end position="985"/>
    </location>
</feature>
<feature type="domain" description="Peptidase C27" evidence="7">
    <location>
        <begin position="1000"/>
        <end position="1301"/>
    </location>
</feature>
<feature type="domain" description="(+)RNA virus helicase ATP-binding" evidence="5">
    <location>
        <begin position="1320"/>
        <end position="1468"/>
    </location>
</feature>
<feature type="domain" description="(+)RNA virus helicase C-terminal" evidence="5">
    <location>
        <begin position="1469"/>
        <end position="1609"/>
    </location>
</feature>
<feature type="domain" description="RdRp catalytic" evidence="4">
    <location>
        <begin position="1870"/>
        <end position="1981"/>
    </location>
</feature>
<feature type="region of interest" description="Required for efficient proteolysis and P150-P90 interaction" evidence="2">
    <location>
        <begin position="36"/>
        <end position="49"/>
    </location>
</feature>
<feature type="region of interest" description="Disordered" evidence="8">
    <location>
        <begin position="715"/>
        <end position="805"/>
    </location>
</feature>
<feature type="region of interest" description="Disordered" evidence="8">
    <location>
        <begin position="990"/>
        <end position="1028"/>
    </location>
</feature>
<feature type="region of interest" description="Interaction with host CALM1" evidence="7">
    <location>
        <begin position="1152"/>
        <end position="1183"/>
    </location>
</feature>
<feature type="region of interest" description="EF-hand-like" evidence="7">
    <location>
        <begin position="1193"/>
        <end position="1228"/>
    </location>
</feature>
<feature type="region of interest" description="Involved in P150-P90 interaction" evidence="2">
    <location>
        <begin position="1700"/>
        <end position="1900"/>
    </location>
</feature>
<feature type="short sequence motif" description="PxxPxR; class II SH3-binding" evidence="2">
    <location>
        <begin position="727"/>
        <end position="732"/>
    </location>
</feature>
<feature type="short sequence motif" description="PxxPxR; class II SH3-binding" evidence="2">
    <location>
        <begin position="747"/>
        <end position="752"/>
    </location>
</feature>
<feature type="short sequence motif" description="PxxPxR; class II SH3-binding" evidence="2">
    <location>
        <begin position="761"/>
        <end position="766"/>
    </location>
</feature>
<feature type="short sequence motif" description="Human RB1 binding" evidence="2">
    <location>
        <begin position="1902"/>
        <end position="1906"/>
    </location>
</feature>
<feature type="compositionally biased region" description="Pro residues" evidence="8">
    <location>
        <begin position="721"/>
        <end position="730"/>
    </location>
</feature>
<feature type="compositionally biased region" description="Pro residues" evidence="8">
    <location>
        <begin position="744"/>
        <end position="767"/>
    </location>
</feature>
<feature type="compositionally biased region" description="Pro residues" evidence="8">
    <location>
        <begin position="993"/>
        <end position="1002"/>
    </location>
</feature>
<feature type="active site" description="For cysteine protease activity" evidence="7">
    <location>
        <position position="1152"/>
    </location>
</feature>
<feature type="active site" description="For cysteine protease activity" evidence="7">
    <location>
        <position position="1273"/>
    </location>
</feature>
<feature type="binding site" evidence="7">
    <location>
        <position position="1175"/>
    </location>
    <ligand>
        <name>Zn(2+)</name>
        <dbReference type="ChEBI" id="CHEBI:29105"/>
    </ligand>
</feature>
<feature type="binding site" evidence="7">
    <location>
        <position position="1178"/>
    </location>
    <ligand>
        <name>Zn(2+)</name>
        <dbReference type="ChEBI" id="CHEBI:29105"/>
    </ligand>
</feature>
<feature type="binding site" evidence="7">
    <location>
        <position position="1227"/>
    </location>
    <ligand>
        <name>Zn(2+)</name>
        <dbReference type="ChEBI" id="CHEBI:29105"/>
    </ligand>
</feature>
<feature type="binding site" evidence="7">
    <location>
        <position position="1273"/>
    </location>
    <ligand>
        <name>Zn(2+)</name>
        <dbReference type="ChEBI" id="CHEBI:29105"/>
    </ligand>
</feature>
<feature type="binding site" evidence="5">
    <location>
        <begin position="1352"/>
        <end position="1359"/>
    </location>
    <ligand>
        <name>a ribonucleoside 5'-triphosphate</name>
        <dbReference type="ChEBI" id="CHEBI:61557"/>
    </ligand>
</feature>
<feature type="site" description="Cleavage; autocatalytic" evidence="7">
    <location>
        <begin position="1301"/>
        <end position="1302"/>
    </location>
</feature>
<proteinExistence type="inferred from homology"/>
<keyword id="KW-0067">ATP-binding</keyword>
<keyword id="KW-0106">Calcium</keyword>
<keyword id="KW-0347">Helicase</keyword>
<keyword id="KW-1035">Host cytoplasm</keyword>
<keyword id="KW-1043">Host membrane</keyword>
<keyword id="KW-0378">Hydrolase</keyword>
<keyword id="KW-0472">Membrane</keyword>
<keyword id="KW-0479">Metal-binding</keyword>
<keyword id="KW-0547">Nucleotide-binding</keyword>
<keyword id="KW-0548">Nucleotidyltransferase</keyword>
<keyword id="KW-0645">Protease</keyword>
<keyword id="KW-0696">RNA-directed RNA polymerase</keyword>
<keyword id="KW-0788">Thiol protease</keyword>
<keyword id="KW-0808">Transferase</keyword>
<keyword id="KW-0693">Viral RNA replication</keyword>
<keyword id="KW-0862">Zinc</keyword>
<organism>
    <name type="scientific">Rubella virus (strain BRDII)</name>
    <name type="common">RUBV</name>
    <dbReference type="NCBI Taxonomy" id="376263"/>
    <lineage>
        <taxon>Viruses</taxon>
        <taxon>Riboviria</taxon>
        <taxon>Orthornavirae</taxon>
        <taxon>Kitrinoviricota</taxon>
        <taxon>Alsuviricetes</taxon>
        <taxon>Hepelivirales</taxon>
        <taxon>Matonaviridae</taxon>
        <taxon>Rubivirus</taxon>
        <taxon>Rubivirus rubellae</taxon>
    </lineage>
</organism>
<comment type="function">
    <molecule>Non-structural polyprotein p200</molecule>
    <text evidence="2">Probable principal replicase for the negative-strand DNA, which replicates the 40S (+) genomic RNA into (-) antigenomic RNA. It cannot replicate the (-) into (+) until cleaved into p150 and p90 mature proteins.</text>
</comment>
<comment type="function">
    <molecule>Protease/methyltransferase p150</molecule>
    <text evidence="2">Protease that cleaves the precursor polyprotein into two mature products. Together with RNA-directed RNA polymerase p90, replicates the 40S genomic and antigenomic RNA by recognizing replications specific signals. The heterodimer P150/p90 is probably the principal replicase for positive-strand genomic RNA and the 24S subgenomic RNA, which codes for structural proteins. Responsible for the mRNA-capping of the viral mRNAs. This function is necessary since all viral RNAs are synthesized in the cytoplasm, and host capping enzymes are restricted to the nucleus. Forms fibers late in the infection that may be involved in cell-to-cell spread of the virus RNA in the absence of virus particle formation.</text>
</comment>
<comment type="function">
    <molecule>RNA-directed RNA polymerase p90</molecule>
    <text evidence="2">Together with protease/methyltransferase p150, replicates the 40S genomic and antigenomic RNA by recognizing replications specific signals. The heterodimer P150/p90 is probably the principal replicase for positive-strand genomic RNA and the 24S subgenomic RNA, which codes for structural proteins. A helicase activity is probably also present.</text>
</comment>
<comment type="catalytic activity">
    <reaction evidence="2 4">
        <text>RNA(n) + a ribonucleoside 5'-triphosphate = RNA(n+1) + diphosphate</text>
        <dbReference type="Rhea" id="RHEA:21248"/>
        <dbReference type="Rhea" id="RHEA-COMP:14527"/>
        <dbReference type="Rhea" id="RHEA-COMP:17342"/>
        <dbReference type="ChEBI" id="CHEBI:33019"/>
        <dbReference type="ChEBI" id="CHEBI:61557"/>
        <dbReference type="ChEBI" id="CHEBI:140395"/>
        <dbReference type="EC" id="2.7.7.48"/>
    </reaction>
</comment>
<comment type="catalytic activity">
    <reaction evidence="2">
        <text>a ribonucleoside 5'-triphosphate + H2O = a ribonucleoside 5'-diphosphate + phosphate + H(+)</text>
        <dbReference type="Rhea" id="RHEA:23680"/>
        <dbReference type="ChEBI" id="CHEBI:15377"/>
        <dbReference type="ChEBI" id="CHEBI:15378"/>
        <dbReference type="ChEBI" id="CHEBI:43474"/>
        <dbReference type="ChEBI" id="CHEBI:57930"/>
        <dbReference type="ChEBI" id="CHEBI:61557"/>
        <dbReference type="EC" id="3.6.1.15"/>
    </reaction>
</comment>
<comment type="catalytic activity">
    <reaction evidence="2">
        <text>ATP + H2O = ADP + phosphate + H(+)</text>
        <dbReference type="Rhea" id="RHEA:13065"/>
        <dbReference type="ChEBI" id="CHEBI:15377"/>
        <dbReference type="ChEBI" id="CHEBI:15378"/>
        <dbReference type="ChEBI" id="CHEBI:30616"/>
        <dbReference type="ChEBI" id="CHEBI:43474"/>
        <dbReference type="ChEBI" id="CHEBI:456216"/>
        <dbReference type="EC" id="3.6.4.13"/>
    </reaction>
</comment>
<comment type="cofactor">
    <cofactor evidence="7">
        <name>Zn(2+)</name>
        <dbReference type="ChEBI" id="CHEBI:29105"/>
    </cofactor>
    <text evidence="7">Zn(2+) is necessary for the protease activity. The protease can also function efficiently with Cd(2+) and Co(2+).</text>
</comment>
<comment type="subunit">
    <molecule>Protease/methyltransferase p150</molecule>
    <text evidence="2">Interacts with RNA-directed RNA polymerase p90. Interacts with host CALM1; this interaction is necessary for the protease activity and viral infectivity. Interacts with host C1QBP. Interacts with the capsid protein.</text>
</comment>
<comment type="subunit">
    <molecule>RNA-directed RNA polymerase p90</molecule>
    <text evidence="2">Interacts with human RB1/retinoblastoma protein. Interacts with protease/methyltransferase p150.</text>
</comment>
<comment type="subcellular location">
    <molecule>Non-structural polyprotein p200</molecule>
    <subcellularLocation>
        <location evidence="2">Host membrane</location>
    </subcellularLocation>
    <subcellularLocation>
        <location evidence="2">Host cytoplasm</location>
        <location evidence="2">Host perinuclear region</location>
    </subcellularLocation>
    <subcellularLocation>
        <location evidence="2">Host cytoplasm</location>
    </subcellularLocation>
    <text evidence="2">Localizes to cytoplasmic foci at 24 hpi.</text>
</comment>
<comment type="subcellular location">
    <molecule>Protease/methyltransferase p150</molecule>
    <subcellularLocation>
        <location evidence="2">Host membrane</location>
    </subcellularLocation>
    <subcellularLocation>
        <location evidence="2">Host cytoplasm</location>
        <location evidence="2">Host perinuclear region</location>
    </subcellularLocation>
    <subcellularLocation>
        <location evidence="2">Host cytoplasm</location>
    </subcellularLocation>
    <text evidence="1 2">At 36 hpi, localizes to the host cytoplasm, probably in vesicles inside host vacuoles of endosomal and lysosomal origin (By similarity). At 72 hpi, localizes to filamentous structures in the host cytoplasm (By similarity).</text>
</comment>
<comment type="subcellular location">
    <molecule>RNA-directed RNA polymerase p90</molecule>
    <subcellularLocation>
        <location evidence="2">Host membrane</location>
    </subcellularLocation>
    <subcellularLocation>
        <location evidence="2">Host cytoplasm</location>
    </subcellularLocation>
    <text evidence="2">Localizes to the cytoplasm and to the cytoplasmic fibers formed by protease/methyltransferase p150.</text>
</comment>
<comment type="domain">
    <molecule>Protease/methyltransferase p150</molecule>
    <text evidence="2">The N-terminus has a methyltransferase activity for mRNA-capping. The C-terminus harbors a protease active in cis or in trans which specifically cleaves and releases the two mature proteins. Both the N-terminus and C-terminus are required for fiber formation. The N-terminus is involved in associating with membranes. An EF-hand Ca(2+)-binding motif is present in the protease. Also contains 3 SH3-binding motifs that are responsible for the interaction with host C1QBP.</text>
</comment>
<comment type="PTM">
    <molecule>Non-structural polyprotein p200</molecule>
    <text evidence="2">Specific enzymatic cleavage by its own cysteine protease yield mature proteins p150 and p90.</text>
</comment>
<comment type="miscellaneous">
    <text evidence="2">Rubella virus in utero infection has frequently severe consequences on normal fetal development, collectively known as congenital rubella syndrome (CRS). The teratogenicity of the virus is possibly due to the interaction between the p90 protein and the human RB1/retinoblastoma protein.</text>
</comment>
<protein>
    <recommendedName>
        <fullName>Non-structural polyprotein p200</fullName>
        <shortName>p200</shortName>
    </recommendedName>
    <component>
        <recommendedName>
            <fullName>Protease/methyltransferase p150</fullName>
            <shortName>p150</shortName>
            <ecNumber>3.4.22.-</ecNumber>
        </recommendedName>
    </component>
    <component>
        <recommendedName>
            <fullName>RNA-directed RNA polymerase p90</fullName>
            <shortName>p90</shortName>
            <ecNumber evidence="4">2.7.7.48</ecNumber>
            <ecNumber>3.6.1.15</ecNumber>
            <ecNumber>3.6.4.13</ecNumber>
        </recommendedName>
    </component>
</protein>
<name>POLN_RUBVC</name>
<evidence type="ECO:0000250" key="1">
    <source>
        <dbReference type="UniProtKB" id="P13889"/>
    </source>
</evidence>
<evidence type="ECO:0000250" key="2">
    <source>
        <dbReference type="UniProtKB" id="Q86500"/>
    </source>
</evidence>
<evidence type="ECO:0000255" key="3">
    <source>
        <dbReference type="PROSITE-ProRule" id="PRU00490"/>
    </source>
</evidence>
<evidence type="ECO:0000255" key="4">
    <source>
        <dbReference type="PROSITE-ProRule" id="PRU00539"/>
    </source>
</evidence>
<evidence type="ECO:0000255" key="5">
    <source>
        <dbReference type="PROSITE-ProRule" id="PRU00990"/>
    </source>
</evidence>
<evidence type="ECO:0000255" key="6">
    <source>
        <dbReference type="PROSITE-ProRule" id="PRU01079"/>
    </source>
</evidence>
<evidence type="ECO:0000255" key="7">
    <source>
        <dbReference type="PROSITE-ProRule" id="PRU01237"/>
    </source>
</evidence>
<evidence type="ECO:0000256" key="8">
    <source>
        <dbReference type="SAM" id="MobiDB-lite"/>
    </source>
</evidence>
<reference key="1">
    <citation type="journal article" date="2003" name="Arch. Virol.">
        <title>Characterization of genotype II Rubella virus strains.</title>
        <authorList>
            <person name="Zheng D.-P."/>
            <person name="Zhou Y.M."/>
            <person name="Zhao K."/>
            <person name="Han Y.-R."/>
            <person name="Frey T.K."/>
        </authorList>
    </citation>
    <scope>NUCLEOTIDE SEQUENCE [GENOMIC RNA]</scope>
</reference>
<organismHost>
    <name type="scientific">Homo sapiens</name>
    <name type="common">Human</name>
    <dbReference type="NCBI Taxonomy" id="9606"/>
</organismHost>